<comment type="catalytic activity">
    <reaction evidence="1">
        <text>L-arginine + H2O = urea + L-ornithine</text>
        <dbReference type="Rhea" id="RHEA:20569"/>
        <dbReference type="ChEBI" id="CHEBI:15377"/>
        <dbReference type="ChEBI" id="CHEBI:16199"/>
        <dbReference type="ChEBI" id="CHEBI:32682"/>
        <dbReference type="ChEBI" id="CHEBI:46911"/>
        <dbReference type="EC" id="3.5.3.1"/>
    </reaction>
</comment>
<comment type="cofactor">
    <cofactor evidence="3">
        <name>Mn(2+)</name>
        <dbReference type="ChEBI" id="CHEBI:29035"/>
    </cofactor>
    <text evidence="3">Binds 2 manganese ions per subunit.</text>
</comment>
<comment type="pathway">
    <text evidence="1">Nitrogen metabolism; urea cycle; L-ornithine and urea from L-arginine: step 1/1.</text>
</comment>
<comment type="similarity">
    <text evidence="3">Belongs to the arginase family.</text>
</comment>
<dbReference type="EC" id="3.5.3.1" evidence="1"/>
<dbReference type="EMBL" id="U57319">
    <property type="protein sequence ID" value="AAC05588.1"/>
    <property type="molecule type" value="Genomic_DNA"/>
</dbReference>
<dbReference type="EMBL" id="AE017224">
    <property type="protein sequence ID" value="AAX75764.1"/>
    <property type="molecule type" value="Genomic_DNA"/>
</dbReference>
<dbReference type="RefSeq" id="WP_002965747.1">
    <property type="nucleotide sequence ID" value="NC_006933.1"/>
</dbReference>
<dbReference type="SMR" id="P0A2Y1"/>
<dbReference type="EnsemblBacteria" id="AAX75764">
    <property type="protein sequence ID" value="AAX75764"/>
    <property type="gene ID" value="BruAb2_0333"/>
</dbReference>
<dbReference type="GeneID" id="93015723"/>
<dbReference type="KEGG" id="bmb:BruAb2_0333"/>
<dbReference type="HOGENOM" id="CLU_039478_6_2_5"/>
<dbReference type="UniPathway" id="UPA00158">
    <property type="reaction ID" value="UER00270"/>
</dbReference>
<dbReference type="Proteomes" id="UP000000540">
    <property type="component" value="Chromosome II"/>
</dbReference>
<dbReference type="GO" id="GO:0005737">
    <property type="term" value="C:cytoplasm"/>
    <property type="evidence" value="ECO:0007669"/>
    <property type="project" value="TreeGrafter"/>
</dbReference>
<dbReference type="GO" id="GO:0004053">
    <property type="term" value="F:arginase activity"/>
    <property type="evidence" value="ECO:0007669"/>
    <property type="project" value="UniProtKB-EC"/>
</dbReference>
<dbReference type="GO" id="GO:0030145">
    <property type="term" value="F:manganese ion binding"/>
    <property type="evidence" value="ECO:0007669"/>
    <property type="project" value="TreeGrafter"/>
</dbReference>
<dbReference type="GO" id="GO:0019547">
    <property type="term" value="P:arginine catabolic process to ornithine"/>
    <property type="evidence" value="ECO:0007669"/>
    <property type="project" value="TreeGrafter"/>
</dbReference>
<dbReference type="GO" id="GO:0000050">
    <property type="term" value="P:urea cycle"/>
    <property type="evidence" value="ECO:0007669"/>
    <property type="project" value="UniProtKB-UniPathway"/>
</dbReference>
<dbReference type="CDD" id="cd09989">
    <property type="entry name" value="Arginase"/>
    <property type="match status" value="1"/>
</dbReference>
<dbReference type="FunFam" id="3.40.800.10:FF:000012">
    <property type="entry name" value="Arginase"/>
    <property type="match status" value="1"/>
</dbReference>
<dbReference type="Gene3D" id="3.40.800.10">
    <property type="entry name" value="Ureohydrolase domain"/>
    <property type="match status" value="1"/>
</dbReference>
<dbReference type="InterPro" id="IPR014033">
    <property type="entry name" value="Arginase"/>
</dbReference>
<dbReference type="InterPro" id="IPR006035">
    <property type="entry name" value="Ureohydrolase"/>
</dbReference>
<dbReference type="InterPro" id="IPR023696">
    <property type="entry name" value="Ureohydrolase_dom_sf"/>
</dbReference>
<dbReference type="InterPro" id="IPR020855">
    <property type="entry name" value="Ureohydrolase_Mn_BS"/>
</dbReference>
<dbReference type="NCBIfam" id="TIGR01229">
    <property type="entry name" value="rocF_arginase"/>
    <property type="match status" value="1"/>
</dbReference>
<dbReference type="PANTHER" id="PTHR43782">
    <property type="entry name" value="ARGINASE"/>
    <property type="match status" value="1"/>
</dbReference>
<dbReference type="PANTHER" id="PTHR43782:SF3">
    <property type="entry name" value="ARGINASE"/>
    <property type="match status" value="1"/>
</dbReference>
<dbReference type="Pfam" id="PF00491">
    <property type="entry name" value="Arginase"/>
    <property type="match status" value="1"/>
</dbReference>
<dbReference type="PIRSF" id="PIRSF036979">
    <property type="entry name" value="Arginase"/>
    <property type="match status" value="1"/>
</dbReference>
<dbReference type="PRINTS" id="PR00116">
    <property type="entry name" value="ARGINASE"/>
</dbReference>
<dbReference type="SUPFAM" id="SSF52768">
    <property type="entry name" value="Arginase/deacetylase"/>
    <property type="match status" value="1"/>
</dbReference>
<dbReference type="PROSITE" id="PS01053">
    <property type="entry name" value="ARGINASE_1"/>
    <property type="match status" value="1"/>
</dbReference>
<dbReference type="PROSITE" id="PS51409">
    <property type="entry name" value="ARGINASE_2"/>
    <property type="match status" value="1"/>
</dbReference>
<accession>P0A2Y1</accession>
<accession>Q579C0</accession>
<accession>Q59174</accession>
<name>ARGI_BRUAB</name>
<protein>
    <recommendedName>
        <fullName>Arginase</fullName>
        <ecNumber evidence="1">3.5.3.1</ecNumber>
    </recommendedName>
</protein>
<gene>
    <name type="primary">arcB</name>
    <name type="synonym">rocF</name>
    <name type="ordered locus">BruAb2_0333</name>
</gene>
<sequence length="306" mass="33182">MHCKILGLPVQEGTGRKGCNMGPDSYRAAGIADAIRELGHECTDLGNLAPAAQRPLQHPNHAIKALPYAVAWIEAISEAAYRESAEGFPIFLGGDHLLAAGTVPGIARRAAEKGRKQFVLWLDAHTDFHTLETTTSGNLHGTPVAYYTGQKGFEGYFPKLAAPIDPHNVCMLGIRSVDPAEREAVKKTEVIVYDMRLIDEHGVAALLRRFLERVKAEDGLLHVSLDVDFLDPSIAPAVGTTVPGGATFREAHLIMEMLHDSGLVTSLDLVELNPFLDERGRTAAVMVDLMASLLGRSVMDRPTISY</sequence>
<organism>
    <name type="scientific">Brucella abortus biovar 1 (strain 9-941)</name>
    <dbReference type="NCBI Taxonomy" id="262698"/>
    <lineage>
        <taxon>Bacteria</taxon>
        <taxon>Pseudomonadati</taxon>
        <taxon>Pseudomonadota</taxon>
        <taxon>Alphaproteobacteria</taxon>
        <taxon>Hyphomicrobiales</taxon>
        <taxon>Brucellaceae</taxon>
        <taxon>Brucella/Ochrobactrum group</taxon>
        <taxon>Brucella</taxon>
    </lineage>
</organism>
<reference key="1">
    <citation type="journal article" date="1997" name="Biochim. Biophys. Acta">
        <title>Brucella abortus arginase and ornithine cyclodeaminase genes are similar to Ti plasmid arginase and ornithine cyclodeaminase.</title>
        <authorList>
            <person name="Kim J."/>
            <person name="Mayfield J.E."/>
        </authorList>
    </citation>
    <scope>NUCLEOTIDE SEQUENCE [GENOMIC DNA]</scope>
    <source>
        <strain>19</strain>
    </source>
</reference>
<reference key="2">
    <citation type="journal article" date="2005" name="J. Bacteriol.">
        <title>Completion of the genome sequence of Brucella abortus and comparison to the highly similar genomes of Brucella melitensis and Brucella suis.</title>
        <authorList>
            <person name="Halling S.M."/>
            <person name="Peterson-Burch B.D."/>
            <person name="Bricker B.J."/>
            <person name="Zuerner R.L."/>
            <person name="Qing Z."/>
            <person name="Li L.-L."/>
            <person name="Kapur V."/>
            <person name="Alt D.P."/>
            <person name="Olsen S.C."/>
        </authorList>
    </citation>
    <scope>NUCLEOTIDE SEQUENCE [LARGE SCALE GENOMIC DNA]</scope>
    <source>
        <strain>9-941</strain>
    </source>
</reference>
<feature type="chain" id="PRO_0000173716" description="Arginase">
    <location>
        <begin position="1"/>
        <end position="306"/>
    </location>
</feature>
<feature type="binding site" evidence="3">
    <location>
        <position position="96"/>
    </location>
    <ligand>
        <name>Mn(2+)</name>
        <dbReference type="ChEBI" id="CHEBI:29035"/>
        <label>1</label>
    </ligand>
</feature>
<feature type="binding site" evidence="3">
    <location>
        <position position="123"/>
    </location>
    <ligand>
        <name>Mn(2+)</name>
        <dbReference type="ChEBI" id="CHEBI:29035"/>
        <label>1</label>
    </ligand>
</feature>
<feature type="binding site" evidence="3">
    <location>
        <position position="123"/>
    </location>
    <ligand>
        <name>Mn(2+)</name>
        <dbReference type="ChEBI" id="CHEBI:29035"/>
        <label>2</label>
    </ligand>
</feature>
<feature type="binding site" evidence="2">
    <location>
        <begin position="125"/>
        <end position="129"/>
    </location>
    <ligand>
        <name>substrate</name>
    </ligand>
</feature>
<feature type="binding site" evidence="3">
    <location>
        <position position="125"/>
    </location>
    <ligand>
        <name>Mn(2+)</name>
        <dbReference type="ChEBI" id="CHEBI:29035"/>
        <label>2</label>
    </ligand>
</feature>
<feature type="binding site" evidence="3">
    <location>
        <position position="127"/>
    </location>
    <ligand>
        <name>Mn(2+)</name>
        <dbReference type="ChEBI" id="CHEBI:29035"/>
        <label>1</label>
    </ligand>
</feature>
<feature type="binding site" evidence="2">
    <location>
        <begin position="136"/>
        <end position="138"/>
    </location>
    <ligand>
        <name>substrate</name>
    </ligand>
</feature>
<feature type="binding site" evidence="2">
    <location>
        <position position="178"/>
    </location>
    <ligand>
        <name>substrate</name>
    </ligand>
</feature>
<feature type="binding site" evidence="3">
    <location>
        <position position="226"/>
    </location>
    <ligand>
        <name>Mn(2+)</name>
        <dbReference type="ChEBI" id="CHEBI:29035"/>
        <label>1</label>
    </ligand>
</feature>
<feature type="binding site" evidence="3">
    <location>
        <position position="226"/>
    </location>
    <ligand>
        <name>Mn(2+)</name>
        <dbReference type="ChEBI" id="CHEBI:29035"/>
        <label>2</label>
    </ligand>
</feature>
<feature type="binding site" evidence="3">
    <location>
        <position position="228"/>
    </location>
    <ligand>
        <name>Mn(2+)</name>
        <dbReference type="ChEBI" id="CHEBI:29035"/>
        <label>2</label>
    </ligand>
</feature>
<feature type="binding site" evidence="2">
    <location>
        <position position="240"/>
    </location>
    <ligand>
        <name>substrate</name>
    </ligand>
</feature>
<feature type="binding site" evidence="2">
    <location>
        <position position="271"/>
    </location>
    <ligand>
        <name>substrate</name>
    </ligand>
</feature>
<keyword id="KW-0056">Arginine metabolism</keyword>
<keyword id="KW-0378">Hydrolase</keyword>
<keyword id="KW-0464">Manganese</keyword>
<keyword id="KW-0479">Metal-binding</keyword>
<evidence type="ECO:0000250" key="1">
    <source>
        <dbReference type="UniProtKB" id="P05089"/>
    </source>
</evidence>
<evidence type="ECO:0000250" key="2">
    <source>
        <dbReference type="UniProtKB" id="P53608"/>
    </source>
</evidence>
<evidence type="ECO:0000255" key="3">
    <source>
        <dbReference type="PROSITE-ProRule" id="PRU00742"/>
    </source>
</evidence>
<proteinExistence type="inferred from homology"/>